<accession>Q1JNC4</accession>
<gene>
    <name evidence="1" type="primary">der</name>
    <name type="synonym">engA</name>
    <name type="ordered locus">MGAS9429_Spy0287</name>
</gene>
<proteinExistence type="inferred from homology"/>
<comment type="function">
    <text evidence="1">GTPase that plays an essential role in the late steps of ribosome biogenesis.</text>
</comment>
<comment type="subunit">
    <text evidence="1">Associates with the 50S ribosomal subunit.</text>
</comment>
<comment type="similarity">
    <text evidence="1">Belongs to the TRAFAC class TrmE-Era-EngA-EngB-Septin-like GTPase superfamily. EngA (Der) GTPase family.</text>
</comment>
<dbReference type="EMBL" id="CP000259">
    <property type="protein sequence ID" value="ABF31475.1"/>
    <property type="molecule type" value="Genomic_DNA"/>
</dbReference>
<dbReference type="RefSeq" id="WP_002991013.1">
    <property type="nucleotide sequence ID" value="NC_008021.1"/>
</dbReference>
<dbReference type="SMR" id="Q1JNC4"/>
<dbReference type="GeneID" id="69901378"/>
<dbReference type="KEGG" id="spk:MGAS9429_Spy0287"/>
<dbReference type="HOGENOM" id="CLU_016077_6_2_9"/>
<dbReference type="Proteomes" id="UP000002433">
    <property type="component" value="Chromosome"/>
</dbReference>
<dbReference type="GO" id="GO:0005525">
    <property type="term" value="F:GTP binding"/>
    <property type="evidence" value="ECO:0007669"/>
    <property type="project" value="UniProtKB-UniRule"/>
</dbReference>
<dbReference type="GO" id="GO:0043022">
    <property type="term" value="F:ribosome binding"/>
    <property type="evidence" value="ECO:0007669"/>
    <property type="project" value="TreeGrafter"/>
</dbReference>
<dbReference type="GO" id="GO:0042254">
    <property type="term" value="P:ribosome biogenesis"/>
    <property type="evidence" value="ECO:0007669"/>
    <property type="project" value="UniProtKB-KW"/>
</dbReference>
<dbReference type="CDD" id="cd01894">
    <property type="entry name" value="EngA1"/>
    <property type="match status" value="1"/>
</dbReference>
<dbReference type="CDD" id="cd01895">
    <property type="entry name" value="EngA2"/>
    <property type="match status" value="1"/>
</dbReference>
<dbReference type="FunFam" id="3.30.300.20:FF:000004">
    <property type="entry name" value="GTPase Der"/>
    <property type="match status" value="1"/>
</dbReference>
<dbReference type="FunFam" id="3.40.50.300:FF:000040">
    <property type="entry name" value="GTPase Der"/>
    <property type="match status" value="1"/>
</dbReference>
<dbReference type="FunFam" id="3.40.50.300:FF:000057">
    <property type="entry name" value="GTPase Der"/>
    <property type="match status" value="1"/>
</dbReference>
<dbReference type="Gene3D" id="3.30.300.20">
    <property type="match status" value="1"/>
</dbReference>
<dbReference type="Gene3D" id="3.40.50.300">
    <property type="entry name" value="P-loop containing nucleotide triphosphate hydrolases"/>
    <property type="match status" value="2"/>
</dbReference>
<dbReference type="HAMAP" id="MF_00195">
    <property type="entry name" value="GTPase_Der"/>
    <property type="match status" value="1"/>
</dbReference>
<dbReference type="InterPro" id="IPR031166">
    <property type="entry name" value="G_ENGA"/>
</dbReference>
<dbReference type="InterPro" id="IPR006073">
    <property type="entry name" value="GTP-bd"/>
</dbReference>
<dbReference type="InterPro" id="IPR016484">
    <property type="entry name" value="GTPase_Der"/>
</dbReference>
<dbReference type="InterPro" id="IPR032859">
    <property type="entry name" value="KH_dom-like"/>
</dbReference>
<dbReference type="InterPro" id="IPR015946">
    <property type="entry name" value="KH_dom-like_a/b"/>
</dbReference>
<dbReference type="InterPro" id="IPR027417">
    <property type="entry name" value="P-loop_NTPase"/>
</dbReference>
<dbReference type="InterPro" id="IPR005225">
    <property type="entry name" value="Small_GTP-bd"/>
</dbReference>
<dbReference type="NCBIfam" id="TIGR03594">
    <property type="entry name" value="GTPase_EngA"/>
    <property type="match status" value="1"/>
</dbReference>
<dbReference type="NCBIfam" id="TIGR00231">
    <property type="entry name" value="small_GTP"/>
    <property type="match status" value="2"/>
</dbReference>
<dbReference type="PANTHER" id="PTHR43834">
    <property type="entry name" value="GTPASE DER"/>
    <property type="match status" value="1"/>
</dbReference>
<dbReference type="PANTHER" id="PTHR43834:SF6">
    <property type="entry name" value="GTPASE DER"/>
    <property type="match status" value="1"/>
</dbReference>
<dbReference type="Pfam" id="PF14714">
    <property type="entry name" value="KH_dom-like"/>
    <property type="match status" value="1"/>
</dbReference>
<dbReference type="Pfam" id="PF01926">
    <property type="entry name" value="MMR_HSR1"/>
    <property type="match status" value="2"/>
</dbReference>
<dbReference type="PIRSF" id="PIRSF006485">
    <property type="entry name" value="GTP-binding_EngA"/>
    <property type="match status" value="1"/>
</dbReference>
<dbReference type="PRINTS" id="PR00326">
    <property type="entry name" value="GTP1OBG"/>
</dbReference>
<dbReference type="SUPFAM" id="SSF52540">
    <property type="entry name" value="P-loop containing nucleoside triphosphate hydrolases"/>
    <property type="match status" value="2"/>
</dbReference>
<dbReference type="PROSITE" id="PS51712">
    <property type="entry name" value="G_ENGA"/>
    <property type="match status" value="2"/>
</dbReference>
<name>DER_STRPC</name>
<reference key="1">
    <citation type="journal article" date="2006" name="Proc. Natl. Acad. Sci. U.S.A.">
        <title>Molecular genetic anatomy of inter- and intraserotype variation in the human bacterial pathogen group A Streptococcus.</title>
        <authorList>
            <person name="Beres S.B."/>
            <person name="Richter E.W."/>
            <person name="Nagiec M.J."/>
            <person name="Sumby P."/>
            <person name="Porcella S.F."/>
            <person name="DeLeo F.R."/>
            <person name="Musser J.M."/>
        </authorList>
    </citation>
    <scope>NUCLEOTIDE SEQUENCE [LARGE SCALE GENOMIC DNA]</scope>
    <source>
        <strain>MGAS9429</strain>
    </source>
</reference>
<organism>
    <name type="scientific">Streptococcus pyogenes serotype M12 (strain MGAS9429)</name>
    <dbReference type="NCBI Taxonomy" id="370551"/>
    <lineage>
        <taxon>Bacteria</taxon>
        <taxon>Bacillati</taxon>
        <taxon>Bacillota</taxon>
        <taxon>Bacilli</taxon>
        <taxon>Lactobacillales</taxon>
        <taxon>Streptococcaceae</taxon>
        <taxon>Streptococcus</taxon>
    </lineage>
</organism>
<evidence type="ECO:0000255" key="1">
    <source>
        <dbReference type="HAMAP-Rule" id="MF_00195"/>
    </source>
</evidence>
<keyword id="KW-0342">GTP-binding</keyword>
<keyword id="KW-0547">Nucleotide-binding</keyword>
<keyword id="KW-0677">Repeat</keyword>
<keyword id="KW-0690">Ribosome biogenesis</keyword>
<sequence length="436" mass="48802">MVLPTVAIVGRPNVGKSTLFNRIAGERISIVEDVEGVTRDRIYATGEWLNRQFSLIDTGGIDDVDAPFMEQIKHQAQIAMEEADVIVFVVSGKEGVTDADEYVSKILYRTNTPVILAVNKVDNPEMRNDIYDFYSLGLGDPYPVSSVHGIGTGDVLDAIVENLPVEEAEENDDIIRFSLIGRPNVGKSSLINAILGEDRVIASPVAGTTRDAIDTHFTDADGQEFTMIDTAGMRKSGKIYENTEKYSVMRAMRAIDRSDVVLMVINAEEGIREYDKRIAGFAHEAGKGMIIVVNKWDTIDKDNHTVAKWEADIRDQFQFLTYAPIIFVSALTKQRLNKLPDLIKRISESQNKRIPSAVLNDVIMDAIAINPTPTDKGKRLKIFYATQVSVKPPTFVVFVNEEELMHFSYLRFLENQIRAAFTFEGTPIHLIARKRK</sequence>
<feature type="chain" id="PRO_1000011754" description="GTPase Der">
    <location>
        <begin position="1"/>
        <end position="436"/>
    </location>
</feature>
<feature type="domain" description="EngA-type G 1">
    <location>
        <begin position="4"/>
        <end position="167"/>
    </location>
</feature>
<feature type="domain" description="EngA-type G 2">
    <location>
        <begin position="175"/>
        <end position="351"/>
    </location>
</feature>
<feature type="domain" description="KH-like" evidence="1">
    <location>
        <begin position="352"/>
        <end position="436"/>
    </location>
</feature>
<feature type="binding site" evidence="1">
    <location>
        <begin position="10"/>
        <end position="17"/>
    </location>
    <ligand>
        <name>GTP</name>
        <dbReference type="ChEBI" id="CHEBI:37565"/>
        <label>1</label>
    </ligand>
</feature>
<feature type="binding site" evidence="1">
    <location>
        <begin position="57"/>
        <end position="61"/>
    </location>
    <ligand>
        <name>GTP</name>
        <dbReference type="ChEBI" id="CHEBI:37565"/>
        <label>1</label>
    </ligand>
</feature>
<feature type="binding site" evidence="1">
    <location>
        <begin position="119"/>
        <end position="122"/>
    </location>
    <ligand>
        <name>GTP</name>
        <dbReference type="ChEBI" id="CHEBI:37565"/>
        <label>1</label>
    </ligand>
</feature>
<feature type="binding site" evidence="1">
    <location>
        <begin position="181"/>
        <end position="188"/>
    </location>
    <ligand>
        <name>GTP</name>
        <dbReference type="ChEBI" id="CHEBI:37565"/>
        <label>2</label>
    </ligand>
</feature>
<feature type="binding site" evidence="1">
    <location>
        <begin position="229"/>
        <end position="233"/>
    </location>
    <ligand>
        <name>GTP</name>
        <dbReference type="ChEBI" id="CHEBI:37565"/>
        <label>2</label>
    </ligand>
</feature>
<feature type="binding site" evidence="1">
    <location>
        <begin position="294"/>
        <end position="297"/>
    </location>
    <ligand>
        <name>GTP</name>
        <dbReference type="ChEBI" id="CHEBI:37565"/>
        <label>2</label>
    </ligand>
</feature>
<protein>
    <recommendedName>
        <fullName evidence="1">GTPase Der</fullName>
    </recommendedName>
    <alternativeName>
        <fullName evidence="1">GTP-binding protein EngA</fullName>
    </alternativeName>
</protein>